<keyword id="KW-0963">Cytoplasm</keyword>
<keyword id="KW-0448">Lipopolysaccharide biosynthesis</keyword>
<keyword id="KW-0548">Nucleotidyltransferase</keyword>
<keyword id="KW-1185">Reference proteome</keyword>
<keyword id="KW-0808">Transferase</keyword>
<protein>
    <recommendedName>
        <fullName evidence="1">3-deoxy-manno-octulosonate cytidylyltransferase</fullName>
        <ecNumber evidence="1">2.7.7.38</ecNumber>
    </recommendedName>
    <alternativeName>
        <fullName evidence="1">CMP-2-keto-3-deoxyoctulosonic acid synthase</fullName>
        <shortName evidence="1">CKS</shortName>
        <shortName evidence="1">CMP-KDO synthase</shortName>
    </alternativeName>
</protein>
<reference key="1">
    <citation type="submission" date="2005-10" db="EMBL/GenBank/DDBJ databases">
        <title>Complete sequence of Pelobacter carbinolicus DSM 2380.</title>
        <authorList>
            <person name="Copeland A."/>
            <person name="Lucas S."/>
            <person name="Lapidus A."/>
            <person name="Barry K."/>
            <person name="Detter J.C."/>
            <person name="Glavina T."/>
            <person name="Hammon N."/>
            <person name="Israni S."/>
            <person name="Pitluck S."/>
            <person name="Chertkov O."/>
            <person name="Schmutz J."/>
            <person name="Larimer F."/>
            <person name="Land M."/>
            <person name="Kyrpides N."/>
            <person name="Ivanova N."/>
            <person name="Richardson P."/>
        </authorList>
    </citation>
    <scope>NUCLEOTIDE SEQUENCE [LARGE SCALE GENOMIC DNA]</scope>
    <source>
        <strain>DSM 2380 / NBRC 103641 / GraBd1</strain>
    </source>
</reference>
<name>KDSB_SYNC1</name>
<comment type="function">
    <text evidence="1">Activates KDO (a required 8-carbon sugar) for incorporation into bacterial lipopolysaccharide in Gram-negative bacteria.</text>
</comment>
<comment type="catalytic activity">
    <reaction evidence="1">
        <text>3-deoxy-alpha-D-manno-oct-2-ulosonate + CTP = CMP-3-deoxy-beta-D-manno-octulosonate + diphosphate</text>
        <dbReference type="Rhea" id="RHEA:23448"/>
        <dbReference type="ChEBI" id="CHEBI:33019"/>
        <dbReference type="ChEBI" id="CHEBI:37563"/>
        <dbReference type="ChEBI" id="CHEBI:85986"/>
        <dbReference type="ChEBI" id="CHEBI:85987"/>
        <dbReference type="EC" id="2.7.7.38"/>
    </reaction>
</comment>
<comment type="pathway">
    <text evidence="1">Nucleotide-sugar biosynthesis; CMP-3-deoxy-D-manno-octulosonate biosynthesis; CMP-3-deoxy-D-manno-octulosonate from 3-deoxy-D-manno-octulosonate and CTP: step 1/1.</text>
</comment>
<comment type="pathway">
    <text evidence="1">Bacterial outer membrane biogenesis; lipopolysaccharide biosynthesis.</text>
</comment>
<comment type="subcellular location">
    <subcellularLocation>
        <location evidence="1">Cytoplasm</location>
    </subcellularLocation>
</comment>
<comment type="similarity">
    <text evidence="1">Belongs to the KdsB family.</text>
</comment>
<feature type="chain" id="PRO_1000003370" description="3-deoxy-manno-octulosonate cytidylyltransferase">
    <location>
        <begin position="1"/>
        <end position="250"/>
    </location>
</feature>
<organism>
    <name type="scientific">Syntrophotalea carbinolica (strain DSM 2380 / NBRC 103641 / GraBd1)</name>
    <name type="common">Pelobacter carbinolicus</name>
    <dbReference type="NCBI Taxonomy" id="338963"/>
    <lineage>
        <taxon>Bacteria</taxon>
        <taxon>Pseudomonadati</taxon>
        <taxon>Thermodesulfobacteriota</taxon>
        <taxon>Desulfuromonadia</taxon>
        <taxon>Desulfuromonadales</taxon>
        <taxon>Syntrophotaleaceae</taxon>
        <taxon>Syntrophotalea</taxon>
    </lineage>
</organism>
<dbReference type="EC" id="2.7.7.38" evidence="1"/>
<dbReference type="EMBL" id="CP000142">
    <property type="protein sequence ID" value="ABA89187.1"/>
    <property type="molecule type" value="Genomic_DNA"/>
</dbReference>
<dbReference type="RefSeq" id="WP_011341692.1">
    <property type="nucleotide sequence ID" value="NC_007498.2"/>
</dbReference>
<dbReference type="SMR" id="Q3A370"/>
<dbReference type="STRING" id="338963.Pcar_1946"/>
<dbReference type="KEGG" id="pca:Pcar_1946"/>
<dbReference type="eggNOG" id="COG1212">
    <property type="taxonomic scope" value="Bacteria"/>
</dbReference>
<dbReference type="HOGENOM" id="CLU_065038_0_1_7"/>
<dbReference type="OrthoDB" id="9815559at2"/>
<dbReference type="UniPathway" id="UPA00030"/>
<dbReference type="UniPathway" id="UPA00358">
    <property type="reaction ID" value="UER00476"/>
</dbReference>
<dbReference type="Proteomes" id="UP000002534">
    <property type="component" value="Chromosome"/>
</dbReference>
<dbReference type="GO" id="GO:0005829">
    <property type="term" value="C:cytosol"/>
    <property type="evidence" value="ECO:0007669"/>
    <property type="project" value="TreeGrafter"/>
</dbReference>
<dbReference type="GO" id="GO:0008690">
    <property type="term" value="F:3-deoxy-manno-octulosonate cytidylyltransferase activity"/>
    <property type="evidence" value="ECO:0007669"/>
    <property type="project" value="UniProtKB-UniRule"/>
</dbReference>
<dbReference type="GO" id="GO:0033468">
    <property type="term" value="P:CMP-keto-3-deoxy-D-manno-octulosonic acid biosynthetic process"/>
    <property type="evidence" value="ECO:0007669"/>
    <property type="project" value="UniProtKB-UniRule"/>
</dbReference>
<dbReference type="GO" id="GO:0009103">
    <property type="term" value="P:lipopolysaccharide biosynthetic process"/>
    <property type="evidence" value="ECO:0007669"/>
    <property type="project" value="UniProtKB-UniRule"/>
</dbReference>
<dbReference type="CDD" id="cd02517">
    <property type="entry name" value="CMP-KDO-Synthetase"/>
    <property type="match status" value="1"/>
</dbReference>
<dbReference type="FunFam" id="3.90.550.10:FF:000011">
    <property type="entry name" value="3-deoxy-manno-octulosonate cytidylyltransferase"/>
    <property type="match status" value="1"/>
</dbReference>
<dbReference type="Gene3D" id="3.90.550.10">
    <property type="entry name" value="Spore Coat Polysaccharide Biosynthesis Protein SpsA, Chain A"/>
    <property type="match status" value="1"/>
</dbReference>
<dbReference type="HAMAP" id="MF_00057">
    <property type="entry name" value="KdsB"/>
    <property type="match status" value="1"/>
</dbReference>
<dbReference type="InterPro" id="IPR003329">
    <property type="entry name" value="Cytidylyl_trans"/>
</dbReference>
<dbReference type="InterPro" id="IPR004528">
    <property type="entry name" value="KdsB"/>
</dbReference>
<dbReference type="InterPro" id="IPR029044">
    <property type="entry name" value="Nucleotide-diphossugar_trans"/>
</dbReference>
<dbReference type="NCBIfam" id="TIGR00466">
    <property type="entry name" value="kdsB"/>
    <property type="match status" value="1"/>
</dbReference>
<dbReference type="NCBIfam" id="NF003950">
    <property type="entry name" value="PRK05450.1-3"/>
    <property type="match status" value="1"/>
</dbReference>
<dbReference type="NCBIfam" id="NF003952">
    <property type="entry name" value="PRK05450.1-5"/>
    <property type="match status" value="1"/>
</dbReference>
<dbReference type="NCBIfam" id="NF009905">
    <property type="entry name" value="PRK13368.1"/>
    <property type="match status" value="1"/>
</dbReference>
<dbReference type="PANTHER" id="PTHR42866">
    <property type="entry name" value="3-DEOXY-MANNO-OCTULOSONATE CYTIDYLYLTRANSFERASE"/>
    <property type="match status" value="1"/>
</dbReference>
<dbReference type="PANTHER" id="PTHR42866:SF2">
    <property type="entry name" value="3-DEOXY-MANNO-OCTULOSONATE CYTIDYLYLTRANSFERASE, MITOCHONDRIAL"/>
    <property type="match status" value="1"/>
</dbReference>
<dbReference type="Pfam" id="PF02348">
    <property type="entry name" value="CTP_transf_3"/>
    <property type="match status" value="1"/>
</dbReference>
<dbReference type="SUPFAM" id="SSF53448">
    <property type="entry name" value="Nucleotide-diphospho-sugar transferases"/>
    <property type="match status" value="1"/>
</dbReference>
<proteinExistence type="inferred from homology"/>
<sequence>MSITAVIPARYASSRFPGKPLARILGKTMIQRVYERTAQAACIDRVVVATDDSRIADVVSGFGGEVQMTRADHATGTDRLAEVTARIDTQLIVNVQGDEPLIDPHMIEAAVAPLSEDPAIPMGTLKTPLLNWQEYRDPNVVKVVTDRRGFALYFSRAPIPHPRELAVDDSAVSPASMGLFRHIGLYVYRKDFLLTFAGLPESPLERLEKLEQLRALENGYAIRVVETDRVSLGVDTPEDLVRVEAHLRGL</sequence>
<accession>Q3A370</accession>
<evidence type="ECO:0000255" key="1">
    <source>
        <dbReference type="HAMAP-Rule" id="MF_00057"/>
    </source>
</evidence>
<gene>
    <name evidence="1" type="primary">kdsB</name>
    <name type="ordered locus">Pcar_1946</name>
</gene>